<sequence length="251" mass="28126">MTHNKTIKKVYIVGAGPGDPELLTLKAQRVLREADVVIYDALVNPEILQHCKPNAEIIKVGKRRNNHSFSQLQIASLLIDRAKKGERVIRLKGGDPLIFGRLGEEILELFSKNIEIEIIPGITSAFAVAADMKFPLTHRQLGSSITFLTGEEFYEKTTNKLKWERIIWGADTIIVYMILYNLPKIIKKFLSVGYSAEKPIVLVQWASLKKKNFLIGTIGTIIHQVIESKFGPPSLAIIGEVIEISSIIQKL</sequence>
<evidence type="ECO:0000250" key="1">
    <source>
        <dbReference type="UniProtKB" id="P21631"/>
    </source>
</evidence>
<evidence type="ECO:0000305" key="2"/>
<geneLocation type="chloroplast"/>
<feature type="chain" id="PRO_0000150376" description="Uroporphyrinogen-III C-methyltransferase">
    <location>
        <begin position="1"/>
        <end position="251"/>
    </location>
</feature>
<feature type="binding site" evidence="1">
    <location>
        <position position="17"/>
    </location>
    <ligand>
        <name>S-adenosyl-L-homocysteine</name>
        <dbReference type="ChEBI" id="CHEBI:57856"/>
    </ligand>
</feature>
<feature type="binding site" evidence="1">
    <location>
        <begin position="93"/>
        <end position="95"/>
    </location>
    <ligand>
        <name>S-adenosyl-L-homocysteine</name>
        <dbReference type="ChEBI" id="CHEBI:57856"/>
    </ligand>
</feature>
<feature type="binding site" evidence="1">
    <location>
        <begin position="123"/>
        <end position="124"/>
    </location>
    <ligand>
        <name>S-adenosyl-L-homocysteine</name>
        <dbReference type="ChEBI" id="CHEBI:57856"/>
    </ligand>
</feature>
<feature type="binding site" evidence="1">
    <location>
        <position position="177"/>
    </location>
    <ligand>
        <name>S-adenosyl-L-homocysteine</name>
        <dbReference type="ChEBI" id="CHEBI:57856"/>
    </ligand>
</feature>
<feature type="binding site" evidence="1">
    <location>
        <position position="206"/>
    </location>
    <ligand>
        <name>S-adenosyl-L-homocysteine</name>
        <dbReference type="ChEBI" id="CHEBI:57856"/>
    </ligand>
</feature>
<reference key="1">
    <citation type="journal article" date="2000" name="J. Mol. Evol.">
        <title>The structure and gene repertoire of an ancient red algal plastid genome.</title>
        <authorList>
            <person name="Gloeckner G."/>
            <person name="Rosenthal A."/>
            <person name="Valentin K.-U."/>
        </authorList>
    </citation>
    <scope>NUCLEOTIDE SEQUENCE [LARGE SCALE GENOMIC DNA]</scope>
    <source>
        <strain>RK-1</strain>
    </source>
</reference>
<accession>O19889</accession>
<proteinExistence type="inferred from homology"/>
<organism>
    <name type="scientific">Cyanidium caldarium</name>
    <name type="common">Red alga</name>
    <dbReference type="NCBI Taxonomy" id="2771"/>
    <lineage>
        <taxon>Eukaryota</taxon>
        <taxon>Rhodophyta</taxon>
        <taxon>Bangiophyceae</taxon>
        <taxon>Cyanidiales</taxon>
        <taxon>Cyanidiaceae</taxon>
        <taxon>Cyanidium</taxon>
    </lineage>
</organism>
<comment type="function">
    <text evidence="1">Catalyzes the two successive C-2 and C-7 methylation reactions involved in the conversion of uroporphyrinogen III to precorrin-2 via the intermediate formation of precorrin-1. It is a step in the biosynthesis of both cobalamin (vitamin B12) and siroheme.</text>
</comment>
<comment type="catalytic activity">
    <reaction evidence="1">
        <text>uroporphyrinogen III + 2 S-adenosyl-L-methionine = precorrin-2 + 2 S-adenosyl-L-homocysteine + H(+)</text>
        <dbReference type="Rhea" id="RHEA:32459"/>
        <dbReference type="ChEBI" id="CHEBI:15378"/>
        <dbReference type="ChEBI" id="CHEBI:57308"/>
        <dbReference type="ChEBI" id="CHEBI:57856"/>
        <dbReference type="ChEBI" id="CHEBI:58827"/>
        <dbReference type="ChEBI" id="CHEBI:59789"/>
        <dbReference type="EC" id="2.1.1.107"/>
    </reaction>
    <physiologicalReaction direction="left-to-right" evidence="1">
        <dbReference type="Rhea" id="RHEA:32460"/>
    </physiologicalReaction>
</comment>
<comment type="pathway">
    <text evidence="1">Cofactor biosynthesis; adenosylcobalamin biosynthesis; precorrin-2 from uroporphyrinogen III: step 1/1.</text>
</comment>
<comment type="pathway">
    <text evidence="1">Porphyrin-containing compound metabolism; siroheme biosynthesis; precorrin-2 from uroporphyrinogen III: step 1/1.</text>
</comment>
<comment type="subcellular location">
    <subcellularLocation>
        <location>Plastid</location>
        <location>Chloroplast</location>
    </subcellularLocation>
</comment>
<comment type="similarity">
    <text evidence="2">Belongs to the precorrin methyltransferase family.</text>
</comment>
<keyword id="KW-0150">Chloroplast</keyword>
<keyword id="KW-0169">Cobalamin biosynthesis</keyword>
<keyword id="KW-0489">Methyltransferase</keyword>
<keyword id="KW-0934">Plastid</keyword>
<keyword id="KW-0627">Porphyrin biosynthesis</keyword>
<keyword id="KW-0949">S-adenosyl-L-methionine</keyword>
<keyword id="KW-0808">Transferase</keyword>
<protein>
    <recommendedName>
        <fullName>Uroporphyrinogen-III C-methyltransferase</fullName>
        <shortName>Urogen III methylase</shortName>
        <ecNumber evidence="1">2.1.1.107</ecNumber>
    </recommendedName>
    <alternativeName>
        <fullName>S-adenosyl-L-methionine:uroporphyrinogen III methyltransferase</fullName>
        <shortName>SUMT</shortName>
    </alternativeName>
    <alternativeName>
        <fullName>Uroporphyrinogen III methylase</fullName>
        <shortName>UROM</shortName>
    </alternativeName>
</protein>
<dbReference type="EC" id="2.1.1.107" evidence="1"/>
<dbReference type="EMBL" id="AF022186">
    <property type="protein sequence ID" value="AAB82700.1"/>
    <property type="molecule type" value="Genomic_DNA"/>
</dbReference>
<dbReference type="PIR" id="T11957">
    <property type="entry name" value="T11957"/>
</dbReference>
<dbReference type="RefSeq" id="NP_045061.1">
    <property type="nucleotide sequence ID" value="NC_001840.1"/>
</dbReference>
<dbReference type="SMR" id="O19889"/>
<dbReference type="GeneID" id="800259"/>
<dbReference type="UniPathway" id="UPA00148">
    <property type="reaction ID" value="UER00211"/>
</dbReference>
<dbReference type="UniPathway" id="UPA00262">
    <property type="reaction ID" value="UER00211"/>
</dbReference>
<dbReference type="GO" id="GO:0009507">
    <property type="term" value="C:chloroplast"/>
    <property type="evidence" value="ECO:0007669"/>
    <property type="project" value="UniProtKB-SubCell"/>
</dbReference>
<dbReference type="GO" id="GO:0004851">
    <property type="term" value="F:uroporphyrin-III C-methyltransferase activity"/>
    <property type="evidence" value="ECO:0007669"/>
    <property type="project" value="UniProtKB-EC"/>
</dbReference>
<dbReference type="GO" id="GO:0032259">
    <property type="term" value="P:methylation"/>
    <property type="evidence" value="ECO:0007669"/>
    <property type="project" value="UniProtKB-KW"/>
</dbReference>
<dbReference type="GO" id="GO:0019354">
    <property type="term" value="P:siroheme biosynthetic process"/>
    <property type="evidence" value="ECO:0007669"/>
    <property type="project" value="UniProtKB-UniPathway"/>
</dbReference>
<dbReference type="CDD" id="cd11642">
    <property type="entry name" value="SUMT"/>
    <property type="match status" value="1"/>
</dbReference>
<dbReference type="FunFam" id="3.40.1010.10:FF:000001">
    <property type="entry name" value="Siroheme synthase"/>
    <property type="match status" value="1"/>
</dbReference>
<dbReference type="Gene3D" id="3.40.1010.10">
    <property type="entry name" value="Cobalt-precorrin-4 Transmethylase, Domain 1"/>
    <property type="match status" value="1"/>
</dbReference>
<dbReference type="Gene3D" id="3.30.950.10">
    <property type="entry name" value="Methyltransferase, Cobalt-precorrin-4 Transmethylase, Domain 2"/>
    <property type="match status" value="1"/>
</dbReference>
<dbReference type="InterPro" id="IPR000878">
    <property type="entry name" value="4pyrrol_Mease"/>
</dbReference>
<dbReference type="InterPro" id="IPR035996">
    <property type="entry name" value="4pyrrol_Methylase_sf"/>
</dbReference>
<dbReference type="InterPro" id="IPR014777">
    <property type="entry name" value="4pyrrole_Mease_sub1"/>
</dbReference>
<dbReference type="InterPro" id="IPR014776">
    <property type="entry name" value="4pyrrole_Mease_sub2"/>
</dbReference>
<dbReference type="InterPro" id="IPR006366">
    <property type="entry name" value="CobA/CysG_C"/>
</dbReference>
<dbReference type="InterPro" id="IPR050161">
    <property type="entry name" value="Siro_Cobalamin_biosynth"/>
</dbReference>
<dbReference type="InterPro" id="IPR003043">
    <property type="entry name" value="Uropor_MeTrfase_CS"/>
</dbReference>
<dbReference type="NCBIfam" id="TIGR01469">
    <property type="entry name" value="cobA_cysG_Cterm"/>
    <property type="match status" value="1"/>
</dbReference>
<dbReference type="NCBIfam" id="NF004790">
    <property type="entry name" value="PRK06136.1"/>
    <property type="match status" value="1"/>
</dbReference>
<dbReference type="PANTHER" id="PTHR45790:SF3">
    <property type="entry name" value="S-ADENOSYL-L-METHIONINE-DEPENDENT UROPORPHYRINOGEN III METHYLTRANSFERASE, CHLOROPLASTIC"/>
    <property type="match status" value="1"/>
</dbReference>
<dbReference type="PANTHER" id="PTHR45790">
    <property type="entry name" value="SIROHEME SYNTHASE-RELATED"/>
    <property type="match status" value="1"/>
</dbReference>
<dbReference type="Pfam" id="PF00590">
    <property type="entry name" value="TP_methylase"/>
    <property type="match status" value="1"/>
</dbReference>
<dbReference type="SUPFAM" id="SSF53790">
    <property type="entry name" value="Tetrapyrrole methylase"/>
    <property type="match status" value="1"/>
</dbReference>
<dbReference type="PROSITE" id="PS00839">
    <property type="entry name" value="SUMT_1"/>
    <property type="match status" value="1"/>
</dbReference>
<dbReference type="PROSITE" id="PS00840">
    <property type="entry name" value="SUMT_2"/>
    <property type="match status" value="1"/>
</dbReference>
<name>SUMT_CYACA</name>
<gene>
    <name type="primary">cobA</name>
</gene>